<gene>
    <name evidence="1" type="primary">TIF34</name>
    <name type="ORF">LELG_01519</name>
</gene>
<organism>
    <name type="scientific">Lodderomyces elongisporus (strain ATCC 11503 / CBS 2605 / JCM 1781 / NBRC 1676 / NRRL YB-4239)</name>
    <name type="common">Yeast</name>
    <name type="synonym">Saccharomyces elongisporus</name>
    <dbReference type="NCBI Taxonomy" id="379508"/>
    <lineage>
        <taxon>Eukaryota</taxon>
        <taxon>Fungi</taxon>
        <taxon>Dikarya</taxon>
        <taxon>Ascomycota</taxon>
        <taxon>Saccharomycotina</taxon>
        <taxon>Pichiomycetes</taxon>
        <taxon>Debaryomycetaceae</taxon>
        <taxon>Candida/Lodderomyces clade</taxon>
        <taxon>Lodderomyces</taxon>
    </lineage>
</organism>
<keyword id="KW-0963">Cytoplasm</keyword>
<keyword id="KW-0396">Initiation factor</keyword>
<keyword id="KW-0648">Protein biosynthesis</keyword>
<keyword id="KW-1185">Reference proteome</keyword>
<keyword id="KW-0677">Repeat</keyword>
<keyword id="KW-0853">WD repeat</keyword>
<dbReference type="EMBL" id="CH981525">
    <property type="protein sequence ID" value="EDK43341.1"/>
    <property type="molecule type" value="Genomic_DNA"/>
</dbReference>
<dbReference type="RefSeq" id="XP_001526691.1">
    <property type="nucleotide sequence ID" value="XM_001526641.1"/>
</dbReference>
<dbReference type="SMR" id="A5DVY3"/>
<dbReference type="FunCoup" id="A5DVY3">
    <property type="interactions" value="1075"/>
</dbReference>
<dbReference type="STRING" id="379508.A5DVY3"/>
<dbReference type="GeneID" id="5233868"/>
<dbReference type="KEGG" id="lel:PVL30_001489"/>
<dbReference type="VEuPathDB" id="FungiDB:LELG_01519"/>
<dbReference type="eggNOG" id="KOG0643">
    <property type="taxonomic scope" value="Eukaryota"/>
</dbReference>
<dbReference type="HOGENOM" id="CLU_043845_0_1_1"/>
<dbReference type="InParanoid" id="A5DVY3"/>
<dbReference type="OMA" id="VWFSHNG"/>
<dbReference type="OrthoDB" id="24966at2759"/>
<dbReference type="Proteomes" id="UP000001996">
    <property type="component" value="Unassembled WGS sequence"/>
</dbReference>
<dbReference type="GO" id="GO:0016282">
    <property type="term" value="C:eukaryotic 43S preinitiation complex"/>
    <property type="evidence" value="ECO:0007669"/>
    <property type="project" value="UniProtKB-UniRule"/>
</dbReference>
<dbReference type="GO" id="GO:0033290">
    <property type="term" value="C:eukaryotic 48S preinitiation complex"/>
    <property type="evidence" value="ECO:0007669"/>
    <property type="project" value="UniProtKB-UniRule"/>
</dbReference>
<dbReference type="GO" id="GO:0071540">
    <property type="term" value="C:eukaryotic translation initiation factor 3 complex, eIF3e"/>
    <property type="evidence" value="ECO:0007669"/>
    <property type="project" value="EnsemblFungi"/>
</dbReference>
<dbReference type="GO" id="GO:0071541">
    <property type="term" value="C:eukaryotic translation initiation factor 3 complex, eIF3m"/>
    <property type="evidence" value="ECO:0007669"/>
    <property type="project" value="EnsemblFungi"/>
</dbReference>
<dbReference type="GO" id="GO:0034399">
    <property type="term" value="C:nuclear periphery"/>
    <property type="evidence" value="ECO:0007669"/>
    <property type="project" value="EnsemblFungi"/>
</dbReference>
<dbReference type="GO" id="GO:0003723">
    <property type="term" value="F:RNA binding"/>
    <property type="evidence" value="ECO:0007669"/>
    <property type="project" value="TreeGrafter"/>
</dbReference>
<dbReference type="GO" id="GO:0003743">
    <property type="term" value="F:translation initiation factor activity"/>
    <property type="evidence" value="ECO:0007669"/>
    <property type="project" value="UniProtKB-UniRule"/>
</dbReference>
<dbReference type="GO" id="GO:0001732">
    <property type="term" value="P:formation of cytoplasmic translation initiation complex"/>
    <property type="evidence" value="ECO:0007669"/>
    <property type="project" value="UniProtKB-UniRule"/>
</dbReference>
<dbReference type="FunFam" id="2.130.10.10:FF:000127">
    <property type="entry name" value="Eukaryotic translation initiation factor 3 subunit I"/>
    <property type="match status" value="1"/>
</dbReference>
<dbReference type="Gene3D" id="2.130.10.10">
    <property type="entry name" value="YVTN repeat-like/Quinoprotein amine dehydrogenase"/>
    <property type="match status" value="1"/>
</dbReference>
<dbReference type="HAMAP" id="MF_03008">
    <property type="entry name" value="eIF3i"/>
    <property type="match status" value="1"/>
</dbReference>
<dbReference type="InterPro" id="IPR027525">
    <property type="entry name" value="eIF3i"/>
</dbReference>
<dbReference type="InterPro" id="IPR015943">
    <property type="entry name" value="WD40/YVTN_repeat-like_dom_sf"/>
</dbReference>
<dbReference type="InterPro" id="IPR036322">
    <property type="entry name" value="WD40_repeat_dom_sf"/>
</dbReference>
<dbReference type="InterPro" id="IPR001680">
    <property type="entry name" value="WD40_rpt"/>
</dbReference>
<dbReference type="PANTHER" id="PTHR19877">
    <property type="entry name" value="EUKARYOTIC TRANSLATION INITIATION FACTOR 3 SUBUNIT I"/>
    <property type="match status" value="1"/>
</dbReference>
<dbReference type="PANTHER" id="PTHR19877:SF1">
    <property type="entry name" value="EUKARYOTIC TRANSLATION INITIATION FACTOR 3 SUBUNIT I"/>
    <property type="match status" value="1"/>
</dbReference>
<dbReference type="Pfam" id="PF24805">
    <property type="entry name" value="EIF3I"/>
    <property type="match status" value="1"/>
</dbReference>
<dbReference type="SMART" id="SM00320">
    <property type="entry name" value="WD40"/>
    <property type="match status" value="6"/>
</dbReference>
<dbReference type="SUPFAM" id="SSF50978">
    <property type="entry name" value="WD40 repeat-like"/>
    <property type="match status" value="1"/>
</dbReference>
<dbReference type="PROSITE" id="PS50082">
    <property type="entry name" value="WD_REPEATS_2"/>
    <property type="match status" value="3"/>
</dbReference>
<dbReference type="PROSITE" id="PS50294">
    <property type="entry name" value="WD_REPEATS_REGION"/>
    <property type="match status" value="1"/>
</dbReference>
<proteinExistence type="inferred from homology"/>
<protein>
    <recommendedName>
        <fullName evidence="1">Eukaryotic translation initiation factor 3 subunit I</fullName>
        <shortName evidence="1">eIF3i</shortName>
    </recommendedName>
    <alternativeName>
        <fullName evidence="1">Eukaryotic translation initiation factor 3 39 kDa subunit homolog</fullName>
        <shortName evidence="1">eIF-3 39 kDa subunit homolog</shortName>
    </alternativeName>
</protein>
<feature type="chain" id="PRO_0000366901" description="Eukaryotic translation initiation factor 3 subunit I">
    <location>
        <begin position="1"/>
        <end position="350"/>
    </location>
</feature>
<feature type="repeat" description="WD 1">
    <location>
        <begin position="8"/>
        <end position="49"/>
    </location>
</feature>
<feature type="repeat" description="WD 2">
    <location>
        <begin position="51"/>
        <end position="89"/>
    </location>
</feature>
<feature type="repeat" description="WD 3">
    <location>
        <begin position="91"/>
        <end position="135"/>
    </location>
</feature>
<feature type="repeat" description="WD 4">
    <location>
        <begin position="149"/>
        <end position="190"/>
    </location>
</feature>
<feature type="repeat" description="WD 5">
    <location>
        <begin position="198"/>
        <end position="240"/>
    </location>
</feature>
<feature type="repeat" description="WD 6">
    <location>
        <begin position="296"/>
        <end position="335"/>
    </location>
</feature>
<sequence length="350" mass="38305">MRPIKLMGHERSLTQVKYNREGDLLFSVAKDNAASIWYSSNGERLGTLEGHQGVIWSIDVDPETLLCATGGGDLAVKLWTVENGQCVYTWNSPSPVRRVSFSPDGKKLLVIADQVMGHIGTISVYDINRDTASLTNQAETASLVIETEQNGSKATVAGWSEDGRFIIAGHDNGYVSKYDAHTGELLKSLQAHGIHNEEKNVSVTDIQFAPEDRSYFITSSKDKCAVLTDVDTFEILKVYKADAPMNTAAITPLKDFVILGGGQEARNVTTTAESQGKFEARFYHKIFEEEIGRVKGHFGPLNTVAVHPDGTGYSSGGEDGFIRVHTFDKSYKDFLFDAERTEKAAAAGLD</sequence>
<evidence type="ECO:0000255" key="1">
    <source>
        <dbReference type="HAMAP-Rule" id="MF_03008"/>
    </source>
</evidence>
<accession>A5DVY3</accession>
<comment type="function">
    <text evidence="1">Component of the eukaryotic translation initiation factor 3 (eIF-3) complex, which is involved in protein synthesis of a specialized repertoire of mRNAs and, together with other initiation factors, stimulates binding of mRNA and methionyl-tRNAi to the 40S ribosome. The eIF-3 complex specifically targets and initiates translation of a subset of mRNAs involved in cell proliferation.</text>
</comment>
<comment type="subunit">
    <text evidence="1">Component of the eukaryotic translation initiation factor 3 (eIF-3) complex.</text>
</comment>
<comment type="subcellular location">
    <subcellularLocation>
        <location evidence="1">Cytoplasm</location>
    </subcellularLocation>
</comment>
<comment type="similarity">
    <text evidence="1">Belongs to the eIF-3 subunit I family.</text>
</comment>
<reference key="1">
    <citation type="journal article" date="2009" name="Nature">
        <title>Evolution of pathogenicity and sexual reproduction in eight Candida genomes.</title>
        <authorList>
            <person name="Butler G."/>
            <person name="Rasmussen M.D."/>
            <person name="Lin M.F."/>
            <person name="Santos M.A.S."/>
            <person name="Sakthikumar S."/>
            <person name="Munro C.A."/>
            <person name="Rheinbay E."/>
            <person name="Grabherr M."/>
            <person name="Forche A."/>
            <person name="Reedy J.L."/>
            <person name="Agrafioti I."/>
            <person name="Arnaud M.B."/>
            <person name="Bates S."/>
            <person name="Brown A.J.P."/>
            <person name="Brunke S."/>
            <person name="Costanzo M.C."/>
            <person name="Fitzpatrick D.A."/>
            <person name="de Groot P.W.J."/>
            <person name="Harris D."/>
            <person name="Hoyer L.L."/>
            <person name="Hube B."/>
            <person name="Klis F.M."/>
            <person name="Kodira C."/>
            <person name="Lennard N."/>
            <person name="Logue M.E."/>
            <person name="Martin R."/>
            <person name="Neiman A.M."/>
            <person name="Nikolaou E."/>
            <person name="Quail M.A."/>
            <person name="Quinn J."/>
            <person name="Santos M.C."/>
            <person name="Schmitzberger F.F."/>
            <person name="Sherlock G."/>
            <person name="Shah P."/>
            <person name="Silverstein K.A.T."/>
            <person name="Skrzypek M.S."/>
            <person name="Soll D."/>
            <person name="Staggs R."/>
            <person name="Stansfield I."/>
            <person name="Stumpf M.P.H."/>
            <person name="Sudbery P.E."/>
            <person name="Srikantha T."/>
            <person name="Zeng Q."/>
            <person name="Berman J."/>
            <person name="Berriman M."/>
            <person name="Heitman J."/>
            <person name="Gow N.A.R."/>
            <person name="Lorenz M.C."/>
            <person name="Birren B.W."/>
            <person name="Kellis M."/>
            <person name="Cuomo C.A."/>
        </authorList>
    </citation>
    <scope>NUCLEOTIDE SEQUENCE [LARGE SCALE GENOMIC DNA]</scope>
    <source>
        <strain>ATCC 11503 / BCRC 21390 / CBS 2605 / JCM 1781 / NBRC 1676 / NRRL YB-4239</strain>
    </source>
</reference>
<name>EIF3I_LODEL</name>